<evidence type="ECO:0000255" key="1">
    <source>
        <dbReference type="PROSITE-ProRule" id="PRU00520"/>
    </source>
</evidence>
<accession>Q58800</accession>
<organism>
    <name type="scientific">Methanocaldococcus jannaschii (strain ATCC 43067 / DSM 2661 / JAL-1 / JCM 10045 / NBRC 100440)</name>
    <name type="common">Methanococcus jannaschii</name>
    <dbReference type="NCBI Taxonomy" id="243232"/>
    <lineage>
        <taxon>Archaea</taxon>
        <taxon>Methanobacteriati</taxon>
        <taxon>Methanobacteriota</taxon>
        <taxon>Methanomada group</taxon>
        <taxon>Methanococci</taxon>
        <taxon>Methanococcales</taxon>
        <taxon>Methanocaldococcaceae</taxon>
        <taxon>Methanocaldococcus</taxon>
    </lineage>
</organism>
<keyword id="KW-1185">Reference proteome</keyword>
<feature type="chain" id="PRO_0000158565" description="Acylphosphatase-like protein MJ1405">
    <location>
        <begin position="1"/>
        <end position="75"/>
    </location>
</feature>
<feature type="domain" description="Acylphosphatase-like" evidence="1">
    <location>
        <begin position="8"/>
        <end position="75"/>
    </location>
</feature>
<reference key="1">
    <citation type="journal article" date="1996" name="Science">
        <title>Complete genome sequence of the methanogenic archaeon, Methanococcus jannaschii.</title>
        <authorList>
            <person name="Bult C.J."/>
            <person name="White O."/>
            <person name="Olsen G.J."/>
            <person name="Zhou L."/>
            <person name="Fleischmann R.D."/>
            <person name="Sutton G.G."/>
            <person name="Blake J.A."/>
            <person name="FitzGerald L.M."/>
            <person name="Clayton R.A."/>
            <person name="Gocayne J.D."/>
            <person name="Kerlavage A.R."/>
            <person name="Dougherty B.A."/>
            <person name="Tomb J.-F."/>
            <person name="Adams M.D."/>
            <person name="Reich C.I."/>
            <person name="Overbeek R."/>
            <person name="Kirkness E.F."/>
            <person name="Weinstock K.G."/>
            <person name="Merrick J.M."/>
            <person name="Glodek A."/>
            <person name="Scott J.L."/>
            <person name="Geoghagen N.S.M."/>
            <person name="Weidman J.F."/>
            <person name="Fuhrmann J.L."/>
            <person name="Nguyen D."/>
            <person name="Utterback T.R."/>
            <person name="Kelley J.M."/>
            <person name="Peterson J.D."/>
            <person name="Sadow P.W."/>
            <person name="Hanna M.C."/>
            <person name="Cotton M.D."/>
            <person name="Roberts K.M."/>
            <person name="Hurst M.A."/>
            <person name="Kaine B.P."/>
            <person name="Borodovsky M."/>
            <person name="Klenk H.-P."/>
            <person name="Fraser C.M."/>
            <person name="Smith H.O."/>
            <person name="Woese C.R."/>
            <person name="Venter J.C."/>
        </authorList>
    </citation>
    <scope>NUCLEOTIDE SEQUENCE [LARGE SCALE GENOMIC DNA]</scope>
    <source>
        <strain>ATCC 43067 / DSM 2661 / JAL-1 / JCM 10045 / NBRC 100440</strain>
    </source>
</reference>
<gene>
    <name type="ordered locus">MJ1405</name>
</gene>
<proteinExistence type="predicted"/>
<protein>
    <recommendedName>
        <fullName>Acylphosphatase-like protein MJ1405</fullName>
    </recommendedName>
</protein>
<name>Y1405_METJA</name>
<dbReference type="EMBL" id="L77117">
    <property type="protein sequence ID" value="AAB99422.1"/>
    <property type="molecule type" value="Genomic_DNA"/>
</dbReference>
<dbReference type="PIR" id="D64475">
    <property type="entry name" value="D64475"/>
</dbReference>
<dbReference type="SMR" id="Q58800"/>
<dbReference type="STRING" id="243232.MJ_1405"/>
<dbReference type="PaxDb" id="243232-MJ_1405"/>
<dbReference type="EnsemblBacteria" id="AAB99422">
    <property type="protein sequence ID" value="AAB99422"/>
    <property type="gene ID" value="MJ_1405"/>
</dbReference>
<dbReference type="KEGG" id="mja:MJ_1405"/>
<dbReference type="eggNOG" id="arCOG01674">
    <property type="taxonomic scope" value="Archaea"/>
</dbReference>
<dbReference type="HOGENOM" id="CLU_2662348_0_0_2"/>
<dbReference type="InParanoid" id="Q58800"/>
<dbReference type="PhylomeDB" id="Q58800"/>
<dbReference type="Proteomes" id="UP000000805">
    <property type="component" value="Chromosome"/>
</dbReference>
<dbReference type="GO" id="GO:0003998">
    <property type="term" value="F:acylphosphatase activity"/>
    <property type="evidence" value="ECO:0007669"/>
    <property type="project" value="InterPro"/>
</dbReference>
<dbReference type="Gene3D" id="3.30.70.100">
    <property type="match status" value="1"/>
</dbReference>
<dbReference type="InterPro" id="IPR020456">
    <property type="entry name" value="Acylphosphatase"/>
</dbReference>
<dbReference type="InterPro" id="IPR001792">
    <property type="entry name" value="Acylphosphatase-like_dom"/>
</dbReference>
<dbReference type="InterPro" id="IPR036046">
    <property type="entry name" value="Acylphosphatase-like_dom_sf"/>
</dbReference>
<dbReference type="PANTHER" id="PTHR47268">
    <property type="entry name" value="ACYLPHOSPHATASE"/>
    <property type="match status" value="1"/>
</dbReference>
<dbReference type="PANTHER" id="PTHR47268:SF4">
    <property type="entry name" value="ACYLPHOSPHATASE"/>
    <property type="match status" value="1"/>
</dbReference>
<dbReference type="Pfam" id="PF00708">
    <property type="entry name" value="Acylphosphatase"/>
    <property type="match status" value="1"/>
</dbReference>
<dbReference type="SUPFAM" id="SSF54975">
    <property type="entry name" value="Acylphosphatase/BLUF domain-like"/>
    <property type="match status" value="1"/>
</dbReference>
<dbReference type="PROSITE" id="PS51160">
    <property type="entry name" value="ACYLPHOSPHATASE_3"/>
    <property type="match status" value="1"/>
</dbReference>
<sequence length="75" mass="8950">MVKFMPTTYEIIIYGRIQHVGFRERIENLGHALGIDGIVYNYEDGTVRILANFPSERKKKLFKDKTNFWRVRKCK</sequence>